<comment type="function">
    <text evidence="6">Required for crossover formation and complete synapsis of homologous chromosomes during meiosis.</text>
</comment>
<comment type="catalytic activity">
    <reaction evidence="1">
        <text>Couples ATP hydrolysis with the unwinding of duplex DNA by translocating in the 3'-5' direction.</text>
        <dbReference type="EC" id="5.6.2.4"/>
    </reaction>
</comment>
<comment type="catalytic activity">
    <reaction evidence="1">
        <text>ATP + H2O = ADP + phosphate + H(+)</text>
        <dbReference type="Rhea" id="RHEA:13065"/>
        <dbReference type="ChEBI" id="CHEBI:15377"/>
        <dbReference type="ChEBI" id="CHEBI:15378"/>
        <dbReference type="ChEBI" id="CHEBI:30616"/>
        <dbReference type="ChEBI" id="CHEBI:43474"/>
        <dbReference type="ChEBI" id="CHEBI:456216"/>
        <dbReference type="EC" id="5.6.2.4"/>
    </reaction>
</comment>
<comment type="cofactor">
    <cofactor evidence="1">
        <name>Zn(2+)</name>
        <dbReference type="ChEBI" id="CHEBI:29105"/>
    </cofactor>
    <text evidence="1">Might have a zinc-finger.</text>
</comment>
<comment type="disruption phenotype">
    <text evidence="6">Male and female mutants are sterile due to severe blockage of spermatogenesis and oogenesis.</text>
</comment>
<comment type="similarity">
    <text evidence="7">Belongs to the helicase family. SKI2 subfamily.</text>
</comment>
<feature type="chain" id="PRO_0000430642" description="Probable ATP-dependent DNA helicase HFM1">
    <location>
        <begin position="1"/>
        <end position="1434"/>
    </location>
</feature>
<feature type="domain" description="Helicase ATP-binding" evidence="3">
    <location>
        <begin position="289"/>
        <end position="476"/>
    </location>
</feature>
<feature type="domain" description="Helicase C-terminal" evidence="4">
    <location>
        <begin position="514"/>
        <end position="718"/>
    </location>
</feature>
<feature type="domain" description="SEC63" evidence="2">
    <location>
        <begin position="775"/>
        <end position="1089"/>
    </location>
</feature>
<feature type="zinc finger region" description="C4-type" evidence="1">
    <location>
        <begin position="1141"/>
        <end position="1156"/>
    </location>
</feature>
<feature type="region of interest" description="Disordered" evidence="5">
    <location>
        <begin position="1110"/>
        <end position="1130"/>
    </location>
</feature>
<feature type="region of interest" description="Disordered" evidence="5">
    <location>
        <begin position="1294"/>
        <end position="1333"/>
    </location>
</feature>
<feature type="short sequence motif" description="DEAH box" evidence="3">
    <location>
        <begin position="410"/>
        <end position="413"/>
    </location>
</feature>
<feature type="compositionally biased region" description="Polar residues" evidence="5">
    <location>
        <begin position="1311"/>
        <end position="1327"/>
    </location>
</feature>
<feature type="binding site" evidence="3">
    <location>
        <begin position="302"/>
        <end position="309"/>
    </location>
    <ligand>
        <name>ATP</name>
        <dbReference type="ChEBI" id="CHEBI:30616"/>
    </ligand>
</feature>
<sequence length="1434" mass="161379">MPKSDDCFFSMDNLFFSSPDETENFPVKEKSLDWFLPPAPLISEIPDIQELEEEIESYKLLGKGKMPRMLTSNLKIINEDTNCISPTQKIHFSYNVHEQDYLNLGGSNNNDMSHVAGKLMYGSSQKYKNHMGAKSPSARSSPGDTKLHDVAEDRQGTSAFKKRLSRTCDSEHDCDYADGSLNLSSHISPVKLTQTKISKENAWTCSNSKQKRQYSTNKFKANDAFSASGIGKDIFKAPSFPAASQPHDIQGITPNGLGSLKAVTEIPAKFRNIFKEFPYFNYIQSKAFDDLLYTDRNFVICAPTGSGKTVVFELAITRLLMEVPLPWLNMKIVYMAPIKALCSQRFDDWKEKFGPVGLNCKELTGDTVMDDLFEIQHANIIITTPEKWDSVTRKWRDNSFIQLVRLFLIDEVHVIKDENRGPTLEVVVSRMKTVQSLSRDLESASPVPVRFVAVSATIPNAEDIAEWLSDGERPAVCLKMDESHRPVKLQKVVLGFPCSSSQTEFKFDLALNYKVYSVIRTYSDQKPTLVFCSTRKGVQQAASVLVKDAKFIISVEQKLRLQKSAYSIRDSKLKDTLVYGVGYHHAGMELSDRKLVEGLFTSGDLPVLFTTSTLAMGMNMPAHLVVIKSTMHYSGGVFEEYSETDILQMIGRAGRPQFDTTATAVIMTRLSTREKYVQMLACNDTVESSLHRHLIEHLNAEIVLHTITDVNIALDWIRSTMLYIRALKNPSHYGFSSGLNKDGIEAKLQELCLKNLKDLSSLDLIKMDEDVNFKPTEAGRLMAWYYITFETVKKFCAISGKETLLDLISMISSCNEFLDVQLRISEKRILNTLNKDPNRITIRFPMAERIKTREMKVNCLIQAQLGCIPIQDFALTQDTVKIFRNGSRIARWLSDFVAAQEKKFAVLLNSVILTKCFKCKLWENSKHVSKQLDKIGISLSNTMVNAGLTSFKKIEEANARELELILNRHPPFGTQIKEAVAHLPKYELEVEQIARYSDIKAEILVTIILRNFEQLQTKRTAPDFHYATLIIGDADNQVVFKHKIMDSVLLKSGNWVKKIDVKRALISEDLSINLISSDYVGLDIHQKFTVFYFGPRKFVNETAMERSSETDISHSDYSGRATATGSSKGMATCKKPGNRECHHHCKNKHACGHDCCKIGVAQKPEVKESAMSSYLSDLKSRDAVSSLPLAKRLKIQMNKSQNVDLKEFGFTPRPSLSSISRSEYLNTPELSILEQRNQHEIYGKVQQGPSEYRDKEVLGVNLELGNEVWDDFDDESLIEVMSLSADAEKMAASGFGDTRDSSLGGSKLPFQKSSSRFQRDNSNSFASSPGKPDAYLRDCSRSSFGLSSVAEIPQRAENASLANLQERRPLTLSPVIERMCFAHSKKTPQSPKFKEVDIFIGNSGSKKEIDLSKYYPDDAAEEMKALLGIFNGIF</sequence>
<proteinExistence type="inferred from homology"/>
<name>HFM1_MOUSE</name>
<protein>
    <recommendedName>
        <fullName>Probable ATP-dependent DNA helicase HFM1</fullName>
        <ecNumber evidence="1">5.6.2.4</ecNumber>
    </recommendedName>
    <alternativeName>
        <fullName evidence="7">DNA 3'-5' helicase HFM1</fullName>
    </alternativeName>
</protein>
<gene>
    <name evidence="8" type="primary">Hfm1</name>
</gene>
<dbReference type="EC" id="5.6.2.4" evidence="1"/>
<dbReference type="EMBL" id="AC137947">
    <property type="status" value="NOT_ANNOTATED_CDS"/>
    <property type="molecule type" value="Genomic_DNA"/>
</dbReference>
<dbReference type="CCDS" id="CCDS51582.1"/>
<dbReference type="RefSeq" id="NP_808541.2">
    <property type="nucleotide sequence ID" value="NM_177873.4"/>
</dbReference>
<dbReference type="SMR" id="D3Z4R1"/>
<dbReference type="BioGRID" id="236907">
    <property type="interactions" value="3"/>
</dbReference>
<dbReference type="FunCoup" id="D3Z4R1">
    <property type="interactions" value="619"/>
</dbReference>
<dbReference type="STRING" id="10090.ENSMUSP00000108310"/>
<dbReference type="iPTMnet" id="D3Z4R1"/>
<dbReference type="PhosphoSitePlus" id="D3Z4R1"/>
<dbReference type="PaxDb" id="10090-ENSMUSP00000108310"/>
<dbReference type="ProteomicsDB" id="269828"/>
<dbReference type="Antibodypedia" id="51797">
    <property type="antibodies" value="111 antibodies from 19 providers"/>
</dbReference>
<dbReference type="DNASU" id="330149"/>
<dbReference type="Ensembl" id="ENSMUST00000112690.10">
    <property type="protein sequence ID" value="ENSMUSP00000108310.4"/>
    <property type="gene ID" value="ENSMUSG00000043410.17"/>
</dbReference>
<dbReference type="Ensembl" id="ENSMUST00000117588.8">
    <property type="protein sequence ID" value="ENSMUSP00000112590.2"/>
    <property type="gene ID" value="ENSMUSG00000043410.17"/>
</dbReference>
<dbReference type="GeneID" id="330149"/>
<dbReference type="KEGG" id="mmu:330149"/>
<dbReference type="UCSC" id="uc012eai.1">
    <property type="organism name" value="mouse"/>
</dbReference>
<dbReference type="AGR" id="MGI:3036246"/>
<dbReference type="CTD" id="164045"/>
<dbReference type="MGI" id="MGI:3036246">
    <property type="gene designation" value="Hfm1"/>
</dbReference>
<dbReference type="VEuPathDB" id="HostDB:ENSMUSG00000043410"/>
<dbReference type="eggNOG" id="KOG0952">
    <property type="taxonomic scope" value="Eukaryota"/>
</dbReference>
<dbReference type="GeneTree" id="ENSGT00550000074822"/>
<dbReference type="HOGENOM" id="CLU_000335_0_0_1"/>
<dbReference type="InParanoid" id="D3Z4R1"/>
<dbReference type="OMA" id="HCKNKHT"/>
<dbReference type="OrthoDB" id="5575at2759"/>
<dbReference type="PhylomeDB" id="D3Z4R1"/>
<dbReference type="TreeFam" id="TF328936"/>
<dbReference type="BioGRID-ORCS" id="330149">
    <property type="hits" value="1 hit in 77 CRISPR screens"/>
</dbReference>
<dbReference type="PRO" id="PR:D3Z4R1"/>
<dbReference type="Proteomes" id="UP000000589">
    <property type="component" value="Chromosome 5"/>
</dbReference>
<dbReference type="RNAct" id="D3Z4R1">
    <property type="molecule type" value="protein"/>
</dbReference>
<dbReference type="Bgee" id="ENSMUSG00000043410">
    <property type="expression patterns" value="Expressed in spermatocyte and 39 other cell types or tissues"/>
</dbReference>
<dbReference type="ExpressionAtlas" id="D3Z4R1">
    <property type="expression patterns" value="baseline and differential"/>
</dbReference>
<dbReference type="GO" id="GO:0005524">
    <property type="term" value="F:ATP binding"/>
    <property type="evidence" value="ECO:0007669"/>
    <property type="project" value="UniProtKB-KW"/>
</dbReference>
<dbReference type="GO" id="GO:0016887">
    <property type="term" value="F:ATP hydrolysis activity"/>
    <property type="evidence" value="ECO:0007669"/>
    <property type="project" value="RHEA"/>
</dbReference>
<dbReference type="GO" id="GO:0004386">
    <property type="term" value="F:helicase activity"/>
    <property type="evidence" value="ECO:0007669"/>
    <property type="project" value="UniProtKB-KW"/>
</dbReference>
<dbReference type="GO" id="GO:0003676">
    <property type="term" value="F:nucleic acid binding"/>
    <property type="evidence" value="ECO:0007669"/>
    <property type="project" value="InterPro"/>
</dbReference>
<dbReference type="GO" id="GO:0048477">
    <property type="term" value="P:oogenesis"/>
    <property type="evidence" value="ECO:0007669"/>
    <property type="project" value="UniProtKB-KW"/>
</dbReference>
<dbReference type="GO" id="GO:0000712">
    <property type="term" value="P:resolution of meiotic recombination intermediates"/>
    <property type="evidence" value="ECO:0000315"/>
    <property type="project" value="MGI"/>
</dbReference>
<dbReference type="GO" id="GO:0007283">
    <property type="term" value="P:spermatogenesis"/>
    <property type="evidence" value="ECO:0007669"/>
    <property type="project" value="UniProtKB-KW"/>
</dbReference>
<dbReference type="CDD" id="cd18023">
    <property type="entry name" value="DEXHc_HFM1"/>
    <property type="match status" value="1"/>
</dbReference>
<dbReference type="CDD" id="cd18795">
    <property type="entry name" value="SF2_C_Ski2"/>
    <property type="match status" value="1"/>
</dbReference>
<dbReference type="FunFam" id="3.40.50.300:FF:001076">
    <property type="entry name" value="ATP-dependent DNA helicase MER3"/>
    <property type="match status" value="1"/>
</dbReference>
<dbReference type="FunFam" id="3.40.50.300:FF:000950">
    <property type="entry name" value="probable ATP-dependent DNA helicase HFM1"/>
    <property type="match status" value="1"/>
</dbReference>
<dbReference type="FunFam" id="1.10.3380.10:FF:000006">
    <property type="entry name" value="probable ATP-dependent DNA helicase HFM1 isoform X1"/>
    <property type="match status" value="1"/>
</dbReference>
<dbReference type="FunFam" id="1.10.10.10:FF:000012">
    <property type="entry name" value="U5 small nuclear ribonucleoprotein helicase"/>
    <property type="match status" value="1"/>
</dbReference>
<dbReference type="Gene3D" id="3.40.50.300">
    <property type="entry name" value="P-loop containing nucleotide triphosphate hydrolases"/>
    <property type="match status" value="2"/>
</dbReference>
<dbReference type="Gene3D" id="1.10.3380.10">
    <property type="entry name" value="Sec63 N-terminal domain-like domain"/>
    <property type="match status" value="1"/>
</dbReference>
<dbReference type="Gene3D" id="1.10.10.10">
    <property type="entry name" value="Winged helix-like DNA-binding domain superfamily/Winged helix DNA-binding domain"/>
    <property type="match status" value="1"/>
</dbReference>
<dbReference type="InterPro" id="IPR011545">
    <property type="entry name" value="DEAD/DEAH_box_helicase_dom"/>
</dbReference>
<dbReference type="InterPro" id="IPR014001">
    <property type="entry name" value="Helicase_ATP-bd"/>
</dbReference>
<dbReference type="InterPro" id="IPR001650">
    <property type="entry name" value="Helicase_C-like"/>
</dbReference>
<dbReference type="InterPro" id="IPR052247">
    <property type="entry name" value="Meiotic_Crossover_Helicase"/>
</dbReference>
<dbReference type="InterPro" id="IPR027417">
    <property type="entry name" value="P-loop_NTPase"/>
</dbReference>
<dbReference type="InterPro" id="IPR004179">
    <property type="entry name" value="Sec63-dom"/>
</dbReference>
<dbReference type="InterPro" id="IPR036388">
    <property type="entry name" value="WH-like_DNA-bd_sf"/>
</dbReference>
<dbReference type="InterPro" id="IPR036390">
    <property type="entry name" value="WH_DNA-bd_sf"/>
</dbReference>
<dbReference type="PANTHER" id="PTHR47835:SF3">
    <property type="entry name" value="HELICASE FOR MEIOSIS 1"/>
    <property type="match status" value="1"/>
</dbReference>
<dbReference type="PANTHER" id="PTHR47835">
    <property type="entry name" value="HFM1, ATP DEPENDENT DNA HELICASE HOMOLOG"/>
    <property type="match status" value="1"/>
</dbReference>
<dbReference type="Pfam" id="PF00270">
    <property type="entry name" value="DEAD"/>
    <property type="match status" value="1"/>
</dbReference>
<dbReference type="Pfam" id="PF00271">
    <property type="entry name" value="Helicase_C"/>
    <property type="match status" value="1"/>
</dbReference>
<dbReference type="Pfam" id="PF02889">
    <property type="entry name" value="Sec63"/>
    <property type="match status" value="1"/>
</dbReference>
<dbReference type="Pfam" id="PF23445">
    <property type="entry name" value="SNRNP200_wHTH"/>
    <property type="match status" value="1"/>
</dbReference>
<dbReference type="SMART" id="SM00487">
    <property type="entry name" value="DEXDc"/>
    <property type="match status" value="1"/>
</dbReference>
<dbReference type="SMART" id="SM00490">
    <property type="entry name" value="HELICc"/>
    <property type="match status" value="1"/>
</dbReference>
<dbReference type="SMART" id="SM00973">
    <property type="entry name" value="Sec63"/>
    <property type="match status" value="1"/>
</dbReference>
<dbReference type="SUPFAM" id="SSF52540">
    <property type="entry name" value="P-loop containing nucleoside triphosphate hydrolases"/>
    <property type="match status" value="1"/>
</dbReference>
<dbReference type="SUPFAM" id="SSF158702">
    <property type="entry name" value="Sec63 N-terminal domain-like"/>
    <property type="match status" value="1"/>
</dbReference>
<dbReference type="SUPFAM" id="SSF46785">
    <property type="entry name" value="Winged helix' DNA-binding domain"/>
    <property type="match status" value="1"/>
</dbReference>
<dbReference type="PROSITE" id="PS51192">
    <property type="entry name" value="HELICASE_ATP_BIND_1"/>
    <property type="match status" value="1"/>
</dbReference>
<dbReference type="PROSITE" id="PS51194">
    <property type="entry name" value="HELICASE_CTER"/>
    <property type="match status" value="1"/>
</dbReference>
<keyword id="KW-0067">ATP-binding</keyword>
<keyword id="KW-0221">Differentiation</keyword>
<keyword id="KW-0347">Helicase</keyword>
<keyword id="KW-0378">Hydrolase</keyword>
<keyword id="KW-0413">Isomerase</keyword>
<keyword id="KW-0469">Meiosis</keyword>
<keyword id="KW-0479">Metal-binding</keyword>
<keyword id="KW-0547">Nucleotide-binding</keyword>
<keyword id="KW-0896">Oogenesis</keyword>
<keyword id="KW-1185">Reference proteome</keyword>
<keyword id="KW-0744">Spermatogenesis</keyword>
<keyword id="KW-0862">Zinc</keyword>
<keyword id="KW-0863">Zinc-finger</keyword>
<organism>
    <name type="scientific">Mus musculus</name>
    <name type="common">Mouse</name>
    <dbReference type="NCBI Taxonomy" id="10090"/>
    <lineage>
        <taxon>Eukaryota</taxon>
        <taxon>Metazoa</taxon>
        <taxon>Chordata</taxon>
        <taxon>Craniata</taxon>
        <taxon>Vertebrata</taxon>
        <taxon>Euteleostomi</taxon>
        <taxon>Mammalia</taxon>
        <taxon>Eutheria</taxon>
        <taxon>Euarchontoglires</taxon>
        <taxon>Glires</taxon>
        <taxon>Rodentia</taxon>
        <taxon>Myomorpha</taxon>
        <taxon>Muroidea</taxon>
        <taxon>Muridae</taxon>
        <taxon>Murinae</taxon>
        <taxon>Mus</taxon>
        <taxon>Mus</taxon>
    </lineage>
</organism>
<accession>D3Z4R1</accession>
<reference key="1">
    <citation type="journal article" date="2009" name="PLoS Biol.">
        <title>Lineage-specific biology revealed by a finished genome assembly of the mouse.</title>
        <authorList>
            <person name="Church D.M."/>
            <person name="Goodstadt L."/>
            <person name="Hillier L.W."/>
            <person name="Zody M.C."/>
            <person name="Goldstein S."/>
            <person name="She X."/>
            <person name="Bult C.J."/>
            <person name="Agarwala R."/>
            <person name="Cherry J.L."/>
            <person name="DiCuccio M."/>
            <person name="Hlavina W."/>
            <person name="Kapustin Y."/>
            <person name="Meric P."/>
            <person name="Maglott D."/>
            <person name="Birtle Z."/>
            <person name="Marques A.C."/>
            <person name="Graves T."/>
            <person name="Zhou S."/>
            <person name="Teague B."/>
            <person name="Potamousis K."/>
            <person name="Churas C."/>
            <person name="Place M."/>
            <person name="Herschleb J."/>
            <person name="Runnheim R."/>
            <person name="Forrest D."/>
            <person name="Amos-Landgraf J."/>
            <person name="Schwartz D.C."/>
            <person name="Cheng Z."/>
            <person name="Lindblad-Toh K."/>
            <person name="Eichler E.E."/>
            <person name="Ponting C.P."/>
        </authorList>
    </citation>
    <scope>NUCLEOTIDE SEQUENCE [LARGE SCALE GENOMIC DNA]</scope>
    <source>
        <strain>C57BL/6J</strain>
    </source>
</reference>
<reference key="2">
    <citation type="journal article" date="2013" name="PLoS Genet.">
        <title>Mouse HFM1/Mer3 is required for crossover formation and complete synapsis of homologous chromosomes during meiosis.</title>
        <authorList>
            <person name="Guiraldelli M.F."/>
            <person name="Eyster C."/>
            <person name="Wilkerson J.L."/>
            <person name="Dresser M.E."/>
            <person name="Pezza R.J."/>
        </authorList>
    </citation>
    <scope>DISRUPTION PHENOTYPE</scope>
    <scope>FUNCTION</scope>
</reference>
<evidence type="ECO:0000250" key="1">
    <source>
        <dbReference type="UniProtKB" id="P51979"/>
    </source>
</evidence>
<evidence type="ECO:0000255" key="2"/>
<evidence type="ECO:0000255" key="3">
    <source>
        <dbReference type="PROSITE-ProRule" id="PRU00541"/>
    </source>
</evidence>
<evidence type="ECO:0000255" key="4">
    <source>
        <dbReference type="PROSITE-ProRule" id="PRU00542"/>
    </source>
</evidence>
<evidence type="ECO:0000256" key="5">
    <source>
        <dbReference type="SAM" id="MobiDB-lite"/>
    </source>
</evidence>
<evidence type="ECO:0000269" key="6">
    <source>
    </source>
</evidence>
<evidence type="ECO:0000305" key="7"/>
<evidence type="ECO:0000312" key="8">
    <source>
        <dbReference type="MGI" id="MGI:3036246"/>
    </source>
</evidence>